<protein>
    <recommendedName>
        <fullName evidence="1">Flagellar L-ring protein</fullName>
    </recommendedName>
    <alternativeName>
        <fullName evidence="1">Basal body L-ring protein</fullName>
    </alternativeName>
</protein>
<feature type="signal peptide" evidence="1">
    <location>
        <begin position="1"/>
        <end position="18"/>
    </location>
</feature>
<feature type="chain" id="PRO_1000123955" description="Flagellar L-ring protein">
    <location>
        <begin position="19"/>
        <end position="231"/>
    </location>
</feature>
<feature type="lipid moiety-binding region" description="N-palmitoyl cysteine" evidence="1">
    <location>
        <position position="19"/>
    </location>
</feature>
<feature type="lipid moiety-binding region" description="S-diacylglycerol cysteine" evidence="1">
    <location>
        <position position="19"/>
    </location>
</feature>
<organism>
    <name type="scientific">Pseudomonas putida (strain W619)</name>
    <dbReference type="NCBI Taxonomy" id="390235"/>
    <lineage>
        <taxon>Bacteria</taxon>
        <taxon>Pseudomonadati</taxon>
        <taxon>Pseudomonadota</taxon>
        <taxon>Gammaproteobacteria</taxon>
        <taxon>Pseudomonadales</taxon>
        <taxon>Pseudomonadaceae</taxon>
        <taxon>Pseudomonas</taxon>
    </lineage>
</organism>
<reference key="1">
    <citation type="submission" date="2008-02" db="EMBL/GenBank/DDBJ databases">
        <title>Complete sequence of Pseudomonas putida W619.</title>
        <authorList>
            <person name="Copeland A."/>
            <person name="Lucas S."/>
            <person name="Lapidus A."/>
            <person name="Barry K."/>
            <person name="Detter J.C."/>
            <person name="Glavina del Rio T."/>
            <person name="Dalin E."/>
            <person name="Tice H."/>
            <person name="Pitluck S."/>
            <person name="Chain P."/>
            <person name="Malfatti S."/>
            <person name="Shin M."/>
            <person name="Vergez L."/>
            <person name="Schmutz J."/>
            <person name="Larimer F."/>
            <person name="Land M."/>
            <person name="Hauser L."/>
            <person name="Kyrpides N."/>
            <person name="Kim E."/>
            <person name="Taghavi S."/>
            <person name="Vangronsveld D."/>
            <person name="van der Lelie D."/>
            <person name="Richardson P."/>
        </authorList>
    </citation>
    <scope>NUCLEOTIDE SEQUENCE [LARGE SCALE GENOMIC DNA]</scope>
    <source>
        <strain>W619</strain>
    </source>
</reference>
<proteinExistence type="inferred from homology"/>
<name>FLGH_PSEPW</name>
<sequence length="231" mass="24304">MNRLLSLFALGGAVLLAGCVAPTAKPNDPYYAPVLPRTPLPAAANNGSIYQAGFEQNLYSDRKAFRVGDIITITLNERTSASKNAGSQIQKDSSANIGLTSLFGATPSTNNPFGSGDLSLEAGYSGERATKGDSKATQGNTLTGSITVTVAEVLPNGIIAVRGEKWMTLNTGEELVRIAGLIRADDIATDNTVPSTRVADARITYSGTGSFADASQPGWLDRFFLSPLWPF</sequence>
<evidence type="ECO:0000255" key="1">
    <source>
        <dbReference type="HAMAP-Rule" id="MF_00415"/>
    </source>
</evidence>
<dbReference type="EMBL" id="CP000949">
    <property type="protein sequence ID" value="ACA74207.1"/>
    <property type="molecule type" value="Genomic_DNA"/>
</dbReference>
<dbReference type="SMR" id="B1JCC5"/>
<dbReference type="STRING" id="390235.PputW619_3725"/>
<dbReference type="KEGG" id="ppw:PputW619_3725"/>
<dbReference type="eggNOG" id="COG2063">
    <property type="taxonomic scope" value="Bacteria"/>
</dbReference>
<dbReference type="HOGENOM" id="CLU_069313_0_2_6"/>
<dbReference type="OrthoDB" id="9789463at2"/>
<dbReference type="GO" id="GO:0009427">
    <property type="term" value="C:bacterial-type flagellum basal body, distal rod, L ring"/>
    <property type="evidence" value="ECO:0007669"/>
    <property type="project" value="InterPro"/>
</dbReference>
<dbReference type="GO" id="GO:0009279">
    <property type="term" value="C:cell outer membrane"/>
    <property type="evidence" value="ECO:0007669"/>
    <property type="project" value="UniProtKB-SubCell"/>
</dbReference>
<dbReference type="GO" id="GO:0003774">
    <property type="term" value="F:cytoskeletal motor activity"/>
    <property type="evidence" value="ECO:0007669"/>
    <property type="project" value="InterPro"/>
</dbReference>
<dbReference type="GO" id="GO:0071973">
    <property type="term" value="P:bacterial-type flagellum-dependent cell motility"/>
    <property type="evidence" value="ECO:0007669"/>
    <property type="project" value="InterPro"/>
</dbReference>
<dbReference type="HAMAP" id="MF_00415">
    <property type="entry name" value="FlgH"/>
    <property type="match status" value="1"/>
</dbReference>
<dbReference type="InterPro" id="IPR000527">
    <property type="entry name" value="Flag_Lring"/>
</dbReference>
<dbReference type="NCBIfam" id="NF001304">
    <property type="entry name" value="PRK00249.1-4"/>
    <property type="match status" value="1"/>
</dbReference>
<dbReference type="PANTHER" id="PTHR34933">
    <property type="entry name" value="FLAGELLAR L-RING PROTEIN"/>
    <property type="match status" value="1"/>
</dbReference>
<dbReference type="PANTHER" id="PTHR34933:SF1">
    <property type="entry name" value="FLAGELLAR L-RING PROTEIN"/>
    <property type="match status" value="1"/>
</dbReference>
<dbReference type="Pfam" id="PF02107">
    <property type="entry name" value="FlgH"/>
    <property type="match status" value="1"/>
</dbReference>
<dbReference type="PRINTS" id="PR01008">
    <property type="entry name" value="FLGLRINGFLGH"/>
</dbReference>
<dbReference type="PROSITE" id="PS51257">
    <property type="entry name" value="PROKAR_LIPOPROTEIN"/>
    <property type="match status" value="1"/>
</dbReference>
<comment type="function">
    <text evidence="1">Assembles around the rod to form the L-ring and probably protects the motor/basal body from shearing forces during rotation.</text>
</comment>
<comment type="subunit">
    <text evidence="1">The basal body constitutes a major portion of the flagellar organelle and consists of four rings (L,P,S, and M) mounted on a central rod.</text>
</comment>
<comment type="subcellular location">
    <subcellularLocation>
        <location evidence="1">Cell outer membrane</location>
        <topology evidence="1">Lipid-anchor</topology>
    </subcellularLocation>
    <subcellularLocation>
        <location evidence="1">Bacterial flagellum basal body</location>
    </subcellularLocation>
</comment>
<comment type="similarity">
    <text evidence="1">Belongs to the FlgH family.</text>
</comment>
<accession>B1JCC5</accession>
<gene>
    <name evidence="1" type="primary">flgH</name>
    <name type="ordered locus">PputW619_3725</name>
</gene>
<keyword id="KW-0975">Bacterial flagellum</keyword>
<keyword id="KW-0998">Cell outer membrane</keyword>
<keyword id="KW-0449">Lipoprotein</keyword>
<keyword id="KW-0472">Membrane</keyword>
<keyword id="KW-0564">Palmitate</keyword>
<keyword id="KW-0732">Signal</keyword>